<sequence>MSSYLFTSESVSEGHPDKVADQISDAVLDAILVQDPRARVACETMVKTGVAIIAGEITTSAWVDLEALTRKVIVDIGYNSSDVGFDGATCGVLNLIGKQSPDINQGVDRKKAEEQGAGDQGLMFGYATNETDSYMPAAIHISHRLVEQQAKIRKKSNSLLPWLRPDAKAQITLRYEDGVASAIDAVVLSTQHDPGIKQKDLVEAVREEILKPVLPSKWLHKGTKFHINPTGKFVIGGPVGDCGLTGRKIIVDTYGGSARHGGGAFSGKDPSKVDRSASYAVRYVAKNVVAAGLADRCEVQVSYAIGVAEPISISVTTFGTGKIPDDKIEKLICQHFDLRPYGIIKMLDLIHPIYQPSASYGHFGRKPRELAYTNSNGERVVATAFSWEKIDKAEVLRADAKLE</sequence>
<accession>Q87AY6</accession>
<proteinExistence type="inferred from homology"/>
<reference key="1">
    <citation type="journal article" date="2003" name="J. Bacteriol.">
        <title>Comparative analyses of the complete genome sequences of Pierce's disease and citrus variegated chlorosis strains of Xylella fastidiosa.</title>
        <authorList>
            <person name="Van Sluys M.A."/>
            <person name="de Oliveira M.C."/>
            <person name="Monteiro-Vitorello C.B."/>
            <person name="Miyaki C.Y."/>
            <person name="Furlan L.R."/>
            <person name="Camargo L.E.A."/>
            <person name="da Silva A.C.R."/>
            <person name="Moon D.H."/>
            <person name="Takita M.A."/>
            <person name="Lemos E.G.M."/>
            <person name="Machado M.A."/>
            <person name="Ferro M.I.T."/>
            <person name="da Silva F.R."/>
            <person name="Goldman M.H.S."/>
            <person name="Goldman G.H."/>
            <person name="Lemos M.V.F."/>
            <person name="El-Dorry H."/>
            <person name="Tsai S.M."/>
            <person name="Carrer H."/>
            <person name="Carraro D.M."/>
            <person name="de Oliveira R.C."/>
            <person name="Nunes L.R."/>
            <person name="Siqueira W.J."/>
            <person name="Coutinho L.L."/>
            <person name="Kimura E.T."/>
            <person name="Ferro E.S."/>
            <person name="Harakava R."/>
            <person name="Kuramae E.E."/>
            <person name="Marino C.L."/>
            <person name="Giglioti E."/>
            <person name="Abreu I.L."/>
            <person name="Alves L.M.C."/>
            <person name="do Amaral A.M."/>
            <person name="Baia G.S."/>
            <person name="Blanco S.R."/>
            <person name="Brito M.S."/>
            <person name="Cannavan F.S."/>
            <person name="Celestino A.V."/>
            <person name="da Cunha A.F."/>
            <person name="Fenille R.C."/>
            <person name="Ferro J.A."/>
            <person name="Formighieri E.F."/>
            <person name="Kishi L.T."/>
            <person name="Leoni S.G."/>
            <person name="Oliveira A.R."/>
            <person name="Rosa V.E. Jr."/>
            <person name="Sassaki F.T."/>
            <person name="Sena J.A.D."/>
            <person name="de Souza A.A."/>
            <person name="Truffi D."/>
            <person name="Tsukumo F."/>
            <person name="Yanai G.M."/>
            <person name="Zaros L.G."/>
            <person name="Civerolo E.L."/>
            <person name="Simpson A.J.G."/>
            <person name="Almeida N.F. Jr."/>
            <person name="Setubal J.C."/>
            <person name="Kitajima J.P."/>
        </authorList>
    </citation>
    <scope>NUCLEOTIDE SEQUENCE [LARGE SCALE GENOMIC DNA]</scope>
    <source>
        <strain>Temecula1 / ATCC 700964</strain>
    </source>
</reference>
<name>METK_XYLFT</name>
<organism>
    <name type="scientific">Xylella fastidiosa (strain Temecula1 / ATCC 700964)</name>
    <dbReference type="NCBI Taxonomy" id="183190"/>
    <lineage>
        <taxon>Bacteria</taxon>
        <taxon>Pseudomonadati</taxon>
        <taxon>Pseudomonadota</taxon>
        <taxon>Gammaproteobacteria</taxon>
        <taxon>Lysobacterales</taxon>
        <taxon>Lysobacteraceae</taxon>
        <taxon>Xylella</taxon>
    </lineage>
</organism>
<dbReference type="EC" id="2.5.1.6" evidence="1"/>
<dbReference type="EMBL" id="AE009442">
    <property type="protein sequence ID" value="AAO29515.1"/>
    <property type="molecule type" value="Genomic_DNA"/>
</dbReference>
<dbReference type="RefSeq" id="WP_004089874.1">
    <property type="nucleotide sequence ID" value="NC_004556.1"/>
</dbReference>
<dbReference type="SMR" id="Q87AY6"/>
<dbReference type="GeneID" id="93905513"/>
<dbReference type="KEGG" id="xft:PD_1677"/>
<dbReference type="HOGENOM" id="CLU_041802_1_1_6"/>
<dbReference type="UniPathway" id="UPA00315">
    <property type="reaction ID" value="UER00080"/>
</dbReference>
<dbReference type="Proteomes" id="UP000002516">
    <property type="component" value="Chromosome"/>
</dbReference>
<dbReference type="GO" id="GO:0005737">
    <property type="term" value="C:cytoplasm"/>
    <property type="evidence" value="ECO:0007669"/>
    <property type="project" value="UniProtKB-SubCell"/>
</dbReference>
<dbReference type="GO" id="GO:0005524">
    <property type="term" value="F:ATP binding"/>
    <property type="evidence" value="ECO:0007669"/>
    <property type="project" value="UniProtKB-UniRule"/>
</dbReference>
<dbReference type="GO" id="GO:0000287">
    <property type="term" value="F:magnesium ion binding"/>
    <property type="evidence" value="ECO:0007669"/>
    <property type="project" value="UniProtKB-UniRule"/>
</dbReference>
<dbReference type="GO" id="GO:0004478">
    <property type="term" value="F:methionine adenosyltransferase activity"/>
    <property type="evidence" value="ECO:0007669"/>
    <property type="project" value="UniProtKB-UniRule"/>
</dbReference>
<dbReference type="GO" id="GO:0006730">
    <property type="term" value="P:one-carbon metabolic process"/>
    <property type="evidence" value="ECO:0007669"/>
    <property type="project" value="UniProtKB-KW"/>
</dbReference>
<dbReference type="GO" id="GO:0006556">
    <property type="term" value="P:S-adenosylmethionine biosynthetic process"/>
    <property type="evidence" value="ECO:0007669"/>
    <property type="project" value="UniProtKB-UniRule"/>
</dbReference>
<dbReference type="CDD" id="cd18079">
    <property type="entry name" value="S-AdoMet_synt"/>
    <property type="match status" value="1"/>
</dbReference>
<dbReference type="FunFam" id="3.30.300.10:FF:000003">
    <property type="entry name" value="S-adenosylmethionine synthase"/>
    <property type="match status" value="1"/>
</dbReference>
<dbReference type="Gene3D" id="3.30.300.10">
    <property type="match status" value="3"/>
</dbReference>
<dbReference type="HAMAP" id="MF_00086">
    <property type="entry name" value="S_AdoMet_synth1"/>
    <property type="match status" value="1"/>
</dbReference>
<dbReference type="InterPro" id="IPR022631">
    <property type="entry name" value="ADOMET_SYNTHASE_CS"/>
</dbReference>
<dbReference type="InterPro" id="IPR022630">
    <property type="entry name" value="S-AdoMet_synt_C"/>
</dbReference>
<dbReference type="InterPro" id="IPR022629">
    <property type="entry name" value="S-AdoMet_synt_central"/>
</dbReference>
<dbReference type="InterPro" id="IPR022628">
    <property type="entry name" value="S-AdoMet_synt_N"/>
</dbReference>
<dbReference type="InterPro" id="IPR002133">
    <property type="entry name" value="S-AdoMet_synthetase"/>
</dbReference>
<dbReference type="InterPro" id="IPR022636">
    <property type="entry name" value="S-AdoMet_synthetase_sfam"/>
</dbReference>
<dbReference type="NCBIfam" id="TIGR01034">
    <property type="entry name" value="metK"/>
    <property type="match status" value="1"/>
</dbReference>
<dbReference type="PANTHER" id="PTHR11964">
    <property type="entry name" value="S-ADENOSYLMETHIONINE SYNTHETASE"/>
    <property type="match status" value="1"/>
</dbReference>
<dbReference type="Pfam" id="PF02773">
    <property type="entry name" value="S-AdoMet_synt_C"/>
    <property type="match status" value="1"/>
</dbReference>
<dbReference type="Pfam" id="PF02772">
    <property type="entry name" value="S-AdoMet_synt_M"/>
    <property type="match status" value="1"/>
</dbReference>
<dbReference type="Pfam" id="PF00438">
    <property type="entry name" value="S-AdoMet_synt_N"/>
    <property type="match status" value="1"/>
</dbReference>
<dbReference type="PIRSF" id="PIRSF000497">
    <property type="entry name" value="MAT"/>
    <property type="match status" value="1"/>
</dbReference>
<dbReference type="SUPFAM" id="SSF55973">
    <property type="entry name" value="S-adenosylmethionine synthetase"/>
    <property type="match status" value="3"/>
</dbReference>
<dbReference type="PROSITE" id="PS00376">
    <property type="entry name" value="ADOMET_SYNTHASE_1"/>
    <property type="match status" value="1"/>
</dbReference>
<dbReference type="PROSITE" id="PS00377">
    <property type="entry name" value="ADOMET_SYNTHASE_2"/>
    <property type="match status" value="1"/>
</dbReference>
<keyword id="KW-0067">ATP-binding</keyword>
<keyword id="KW-0963">Cytoplasm</keyword>
<keyword id="KW-0460">Magnesium</keyword>
<keyword id="KW-0479">Metal-binding</keyword>
<keyword id="KW-0547">Nucleotide-binding</keyword>
<keyword id="KW-0554">One-carbon metabolism</keyword>
<keyword id="KW-0630">Potassium</keyword>
<keyword id="KW-1185">Reference proteome</keyword>
<keyword id="KW-0808">Transferase</keyword>
<protein>
    <recommendedName>
        <fullName evidence="1">S-adenosylmethionine synthase</fullName>
        <shortName evidence="1">AdoMet synthase</shortName>
        <ecNumber evidence="1">2.5.1.6</ecNumber>
    </recommendedName>
    <alternativeName>
        <fullName evidence="1">MAT</fullName>
    </alternativeName>
    <alternativeName>
        <fullName evidence="1">Methionine adenosyltransferase</fullName>
    </alternativeName>
</protein>
<evidence type="ECO:0000255" key="1">
    <source>
        <dbReference type="HAMAP-Rule" id="MF_00086"/>
    </source>
</evidence>
<feature type="chain" id="PRO_0000174629" description="S-adenosylmethionine synthase">
    <location>
        <begin position="1"/>
        <end position="403"/>
    </location>
</feature>
<feature type="region of interest" description="Flexible loop" evidence="1">
    <location>
        <begin position="99"/>
        <end position="109"/>
    </location>
</feature>
<feature type="binding site" description="in other chain" evidence="1">
    <location>
        <position position="15"/>
    </location>
    <ligand>
        <name>ATP</name>
        <dbReference type="ChEBI" id="CHEBI:30616"/>
        <note>ligand shared between two neighboring subunits</note>
    </ligand>
</feature>
<feature type="binding site" evidence="1">
    <location>
        <position position="17"/>
    </location>
    <ligand>
        <name>Mg(2+)</name>
        <dbReference type="ChEBI" id="CHEBI:18420"/>
    </ligand>
</feature>
<feature type="binding site" evidence="1">
    <location>
        <position position="43"/>
    </location>
    <ligand>
        <name>K(+)</name>
        <dbReference type="ChEBI" id="CHEBI:29103"/>
    </ligand>
</feature>
<feature type="binding site" description="in other chain" evidence="1">
    <location>
        <position position="56"/>
    </location>
    <ligand>
        <name>L-methionine</name>
        <dbReference type="ChEBI" id="CHEBI:57844"/>
        <note>ligand shared between two neighboring subunits</note>
    </ligand>
</feature>
<feature type="binding site" description="in other chain" evidence="1">
    <location>
        <position position="99"/>
    </location>
    <ligand>
        <name>L-methionine</name>
        <dbReference type="ChEBI" id="CHEBI:57844"/>
        <note>ligand shared between two neighboring subunits</note>
    </ligand>
</feature>
<feature type="binding site" description="in other chain" evidence="1">
    <location>
        <begin position="166"/>
        <end position="168"/>
    </location>
    <ligand>
        <name>ATP</name>
        <dbReference type="ChEBI" id="CHEBI:30616"/>
        <note>ligand shared between two neighboring subunits</note>
    </ligand>
</feature>
<feature type="binding site" description="in other chain" evidence="1">
    <location>
        <begin position="232"/>
        <end position="233"/>
    </location>
    <ligand>
        <name>ATP</name>
        <dbReference type="ChEBI" id="CHEBI:30616"/>
        <note>ligand shared between two neighboring subunits</note>
    </ligand>
</feature>
<feature type="binding site" evidence="1">
    <location>
        <position position="241"/>
    </location>
    <ligand>
        <name>ATP</name>
        <dbReference type="ChEBI" id="CHEBI:30616"/>
        <note>ligand shared between two neighboring subunits</note>
    </ligand>
</feature>
<feature type="binding site" evidence="1">
    <location>
        <position position="241"/>
    </location>
    <ligand>
        <name>L-methionine</name>
        <dbReference type="ChEBI" id="CHEBI:57844"/>
        <note>ligand shared between two neighboring subunits</note>
    </ligand>
</feature>
<feature type="binding site" description="in other chain" evidence="1">
    <location>
        <begin position="247"/>
        <end position="248"/>
    </location>
    <ligand>
        <name>ATP</name>
        <dbReference type="ChEBI" id="CHEBI:30616"/>
        <note>ligand shared between two neighboring subunits</note>
    </ligand>
</feature>
<feature type="binding site" evidence="1">
    <location>
        <position position="264"/>
    </location>
    <ligand>
        <name>ATP</name>
        <dbReference type="ChEBI" id="CHEBI:30616"/>
        <note>ligand shared between two neighboring subunits</note>
    </ligand>
</feature>
<feature type="binding site" evidence="1">
    <location>
        <position position="268"/>
    </location>
    <ligand>
        <name>ATP</name>
        <dbReference type="ChEBI" id="CHEBI:30616"/>
        <note>ligand shared between two neighboring subunits</note>
    </ligand>
</feature>
<feature type="binding site" description="in other chain" evidence="1">
    <location>
        <position position="272"/>
    </location>
    <ligand>
        <name>L-methionine</name>
        <dbReference type="ChEBI" id="CHEBI:57844"/>
        <note>ligand shared between two neighboring subunits</note>
    </ligand>
</feature>
<comment type="function">
    <text evidence="1">Catalyzes the formation of S-adenosylmethionine (AdoMet) from methionine and ATP. The overall synthetic reaction is composed of two sequential steps, AdoMet formation and the subsequent tripolyphosphate hydrolysis which occurs prior to release of AdoMet from the enzyme.</text>
</comment>
<comment type="catalytic activity">
    <reaction evidence="1">
        <text>L-methionine + ATP + H2O = S-adenosyl-L-methionine + phosphate + diphosphate</text>
        <dbReference type="Rhea" id="RHEA:21080"/>
        <dbReference type="ChEBI" id="CHEBI:15377"/>
        <dbReference type="ChEBI" id="CHEBI:30616"/>
        <dbReference type="ChEBI" id="CHEBI:33019"/>
        <dbReference type="ChEBI" id="CHEBI:43474"/>
        <dbReference type="ChEBI" id="CHEBI:57844"/>
        <dbReference type="ChEBI" id="CHEBI:59789"/>
        <dbReference type="EC" id="2.5.1.6"/>
    </reaction>
</comment>
<comment type="cofactor">
    <cofactor evidence="1">
        <name>Mg(2+)</name>
        <dbReference type="ChEBI" id="CHEBI:18420"/>
    </cofactor>
    <text evidence="1">Binds 2 divalent ions per subunit.</text>
</comment>
<comment type="cofactor">
    <cofactor evidence="1">
        <name>K(+)</name>
        <dbReference type="ChEBI" id="CHEBI:29103"/>
    </cofactor>
    <text evidence="1">Binds 1 potassium ion per subunit.</text>
</comment>
<comment type="pathway">
    <text evidence="1">Amino-acid biosynthesis; S-adenosyl-L-methionine biosynthesis; S-adenosyl-L-methionine from L-methionine: step 1/1.</text>
</comment>
<comment type="subunit">
    <text evidence="1">Homotetramer; dimer of dimers.</text>
</comment>
<comment type="subcellular location">
    <subcellularLocation>
        <location evidence="1">Cytoplasm</location>
    </subcellularLocation>
</comment>
<comment type="similarity">
    <text evidence="1">Belongs to the AdoMet synthase family.</text>
</comment>
<gene>
    <name evidence="1" type="primary">metK</name>
    <name type="ordered locus">PD_1677</name>
</gene>